<dbReference type="EMBL" id="AF065159">
    <property type="protein sequence ID" value="AAF22872.1"/>
    <property type="molecule type" value="Genomic_DNA"/>
</dbReference>
<dbReference type="EMBL" id="BA000040">
    <property type="protein sequence ID" value="BAC50323.1"/>
    <property type="molecule type" value="Genomic_DNA"/>
</dbReference>
<dbReference type="RefSeq" id="NP_771698.1">
    <property type="nucleotide sequence ID" value="NC_004463.1"/>
</dbReference>
<dbReference type="RefSeq" id="WP_011087819.1">
    <property type="nucleotide sequence ID" value="NC_004463.1"/>
</dbReference>
<dbReference type="SMR" id="Q9RH67"/>
<dbReference type="FunCoup" id="Q9RH67">
    <property type="interactions" value="73"/>
</dbReference>
<dbReference type="STRING" id="224911.AAV28_22660"/>
<dbReference type="EnsemblBacteria" id="BAC50323">
    <property type="protein sequence ID" value="BAC50323"/>
    <property type="gene ID" value="BAC50323"/>
</dbReference>
<dbReference type="GeneID" id="46492065"/>
<dbReference type="KEGG" id="bja:bll5058"/>
<dbReference type="PATRIC" id="fig|224911.44.peg.4926"/>
<dbReference type="eggNOG" id="COG1381">
    <property type="taxonomic scope" value="Bacteria"/>
</dbReference>
<dbReference type="HOGENOM" id="CLU_086029_0_0_5"/>
<dbReference type="InParanoid" id="Q9RH67"/>
<dbReference type="OrthoDB" id="9804792at2"/>
<dbReference type="PhylomeDB" id="Q9RH67"/>
<dbReference type="Proteomes" id="UP000002526">
    <property type="component" value="Chromosome"/>
</dbReference>
<dbReference type="GO" id="GO:0043590">
    <property type="term" value="C:bacterial nucleoid"/>
    <property type="evidence" value="ECO:0000318"/>
    <property type="project" value="GO_Central"/>
</dbReference>
<dbReference type="GO" id="GO:0006310">
    <property type="term" value="P:DNA recombination"/>
    <property type="evidence" value="ECO:0007669"/>
    <property type="project" value="UniProtKB-UniRule"/>
</dbReference>
<dbReference type="GO" id="GO:0006302">
    <property type="term" value="P:double-strand break repair"/>
    <property type="evidence" value="ECO:0000318"/>
    <property type="project" value="GO_Central"/>
</dbReference>
<dbReference type="Gene3D" id="2.40.50.140">
    <property type="entry name" value="Nucleic acid-binding proteins"/>
    <property type="match status" value="1"/>
</dbReference>
<dbReference type="Gene3D" id="1.20.1440.120">
    <property type="entry name" value="Recombination protein O, C-terminal domain"/>
    <property type="match status" value="1"/>
</dbReference>
<dbReference type="HAMAP" id="MF_00201">
    <property type="entry name" value="RecO"/>
    <property type="match status" value="1"/>
</dbReference>
<dbReference type="InterPro" id="IPR037278">
    <property type="entry name" value="ARFGAP/RecO"/>
</dbReference>
<dbReference type="InterPro" id="IPR022572">
    <property type="entry name" value="DNA_rep/recomb_RecO_N"/>
</dbReference>
<dbReference type="InterPro" id="IPR012340">
    <property type="entry name" value="NA-bd_OB-fold"/>
</dbReference>
<dbReference type="InterPro" id="IPR003717">
    <property type="entry name" value="RecO"/>
</dbReference>
<dbReference type="InterPro" id="IPR042242">
    <property type="entry name" value="RecO_C"/>
</dbReference>
<dbReference type="NCBIfam" id="TIGR00613">
    <property type="entry name" value="reco"/>
    <property type="match status" value="1"/>
</dbReference>
<dbReference type="PANTHER" id="PTHR33991">
    <property type="entry name" value="DNA REPAIR PROTEIN RECO"/>
    <property type="match status" value="1"/>
</dbReference>
<dbReference type="PANTHER" id="PTHR33991:SF1">
    <property type="entry name" value="DNA REPAIR PROTEIN RECO"/>
    <property type="match status" value="1"/>
</dbReference>
<dbReference type="Pfam" id="PF02565">
    <property type="entry name" value="RecO_C"/>
    <property type="match status" value="1"/>
</dbReference>
<dbReference type="Pfam" id="PF11967">
    <property type="entry name" value="RecO_N"/>
    <property type="match status" value="1"/>
</dbReference>
<dbReference type="SUPFAM" id="SSF57863">
    <property type="entry name" value="ArfGap/RecO-like zinc finger"/>
    <property type="match status" value="1"/>
</dbReference>
<dbReference type="SUPFAM" id="SSF50249">
    <property type="entry name" value="Nucleic acid-binding proteins"/>
    <property type="match status" value="1"/>
</dbReference>
<feature type="chain" id="PRO_0000204936" description="DNA repair protein RecO">
    <location>
        <begin position="1"/>
        <end position="250"/>
    </location>
</feature>
<feature type="sequence conflict" description="In Ref. 1; AAF22872." evidence="2" ref="1">
    <original>S</original>
    <variation>T</variation>
    <location>
        <position position="55"/>
    </location>
</feature>
<sequence>MEWTDEGIVLGVRRHGESSAIVELLTRAHGRHLGLVRGGAGSRMRPLLQPGNSVSAVWRARLDEHLGTYAVEGLKLRAATLLASSHGVYGVTHLASIARLLPERDPHEEIFGLLEHSLDDFDDIGSAAVHVIHFELAMLAELGFGLALDNCAVTGETTDLIYVSPKSGGAVSRGAGEPWRDRLLRLPPFLRHGETATELTDQDLQDGFRLTGLFLLRHVLEPRGQVHSDARAGFINALTRQQARAAIPAP</sequence>
<reference key="1">
    <citation type="submission" date="1999-10" db="EMBL/GenBank/DDBJ databases">
        <authorList>
            <person name="Mueller P."/>
            <person name="Stingel D."/>
        </authorList>
    </citation>
    <scope>NUCLEOTIDE SEQUENCE [GENOMIC DNA]</scope>
    <source>
        <strain>USDA 110spc4</strain>
    </source>
</reference>
<reference key="2">
    <citation type="journal article" date="2002" name="DNA Res.">
        <title>Complete genomic sequence of nitrogen-fixing symbiotic bacterium Bradyrhizobium japonicum USDA110.</title>
        <authorList>
            <person name="Kaneko T."/>
            <person name="Nakamura Y."/>
            <person name="Sato S."/>
            <person name="Minamisawa K."/>
            <person name="Uchiumi T."/>
            <person name="Sasamoto S."/>
            <person name="Watanabe A."/>
            <person name="Idesawa K."/>
            <person name="Iriguchi M."/>
            <person name="Kawashima K."/>
            <person name="Kohara M."/>
            <person name="Matsumoto M."/>
            <person name="Shimpo S."/>
            <person name="Tsuruoka H."/>
            <person name="Wada T."/>
            <person name="Yamada M."/>
            <person name="Tabata S."/>
        </authorList>
    </citation>
    <scope>NUCLEOTIDE SEQUENCE [LARGE SCALE GENOMIC DNA]</scope>
    <source>
        <strain>JCM 10833 / BCRC 13528 / IAM 13628 / NBRC 14792 / USDA 110</strain>
    </source>
</reference>
<accession>Q9RH67</accession>
<evidence type="ECO:0000250" key="1"/>
<evidence type="ECO:0000305" key="2"/>
<keyword id="KW-0227">DNA damage</keyword>
<keyword id="KW-0233">DNA recombination</keyword>
<keyword id="KW-0234">DNA repair</keyword>
<keyword id="KW-1185">Reference proteome</keyword>
<protein>
    <recommendedName>
        <fullName>DNA repair protein RecO</fullName>
    </recommendedName>
    <alternativeName>
        <fullName>Recombination protein O</fullName>
    </alternativeName>
</protein>
<gene>
    <name type="primary">recO</name>
    <name type="ordered locus">bll5058</name>
</gene>
<comment type="function">
    <text evidence="1">Involved in DNA repair and RecF pathway recombination.</text>
</comment>
<comment type="similarity">
    <text evidence="2">Belongs to the RecO family.</text>
</comment>
<name>RECO_BRADU</name>
<organism>
    <name type="scientific">Bradyrhizobium diazoefficiens (strain JCM 10833 / BCRC 13528 / IAM 13628 / NBRC 14792 / USDA 110)</name>
    <dbReference type="NCBI Taxonomy" id="224911"/>
    <lineage>
        <taxon>Bacteria</taxon>
        <taxon>Pseudomonadati</taxon>
        <taxon>Pseudomonadota</taxon>
        <taxon>Alphaproteobacteria</taxon>
        <taxon>Hyphomicrobiales</taxon>
        <taxon>Nitrobacteraceae</taxon>
        <taxon>Bradyrhizobium</taxon>
    </lineage>
</organism>
<proteinExistence type="inferred from homology"/>